<name>HIS6_CLOBK</name>
<keyword id="KW-0028">Amino-acid biosynthesis</keyword>
<keyword id="KW-0963">Cytoplasm</keyword>
<keyword id="KW-0368">Histidine biosynthesis</keyword>
<keyword id="KW-0456">Lyase</keyword>
<protein>
    <recommendedName>
        <fullName evidence="1">Imidazole glycerol phosphate synthase subunit HisF</fullName>
        <ecNumber evidence="1">4.3.2.10</ecNumber>
    </recommendedName>
    <alternativeName>
        <fullName evidence="1">IGP synthase cyclase subunit</fullName>
    </alternativeName>
    <alternativeName>
        <fullName evidence="1">IGP synthase subunit HisF</fullName>
    </alternativeName>
    <alternativeName>
        <fullName evidence="1">ImGP synthase subunit HisF</fullName>
        <shortName evidence="1">IGPS subunit HisF</shortName>
    </alternativeName>
</protein>
<organism>
    <name type="scientific">Clostridium botulinum (strain Okra / Type B1)</name>
    <dbReference type="NCBI Taxonomy" id="498213"/>
    <lineage>
        <taxon>Bacteria</taxon>
        <taxon>Bacillati</taxon>
        <taxon>Bacillota</taxon>
        <taxon>Clostridia</taxon>
        <taxon>Eubacteriales</taxon>
        <taxon>Clostridiaceae</taxon>
        <taxon>Clostridium</taxon>
    </lineage>
</organism>
<feature type="chain" id="PRO_1000134983" description="Imidazole glycerol phosphate synthase subunit HisF">
    <location>
        <begin position="1"/>
        <end position="253"/>
    </location>
</feature>
<feature type="active site" evidence="1">
    <location>
        <position position="11"/>
    </location>
</feature>
<feature type="active site" evidence="1">
    <location>
        <position position="130"/>
    </location>
</feature>
<gene>
    <name evidence="1" type="primary">hisF</name>
    <name type="ordered locus">CLD_2980</name>
</gene>
<proteinExistence type="inferred from homology"/>
<comment type="function">
    <text evidence="1">IGPS catalyzes the conversion of PRFAR and glutamine to IGP, AICAR and glutamate. The HisF subunit catalyzes the cyclization activity that produces IGP and AICAR from PRFAR using the ammonia provided by the HisH subunit.</text>
</comment>
<comment type="catalytic activity">
    <reaction evidence="1">
        <text>5-[(5-phospho-1-deoxy-D-ribulos-1-ylimino)methylamino]-1-(5-phospho-beta-D-ribosyl)imidazole-4-carboxamide + L-glutamine = D-erythro-1-(imidazol-4-yl)glycerol 3-phosphate + 5-amino-1-(5-phospho-beta-D-ribosyl)imidazole-4-carboxamide + L-glutamate + H(+)</text>
        <dbReference type="Rhea" id="RHEA:24793"/>
        <dbReference type="ChEBI" id="CHEBI:15378"/>
        <dbReference type="ChEBI" id="CHEBI:29985"/>
        <dbReference type="ChEBI" id="CHEBI:58278"/>
        <dbReference type="ChEBI" id="CHEBI:58359"/>
        <dbReference type="ChEBI" id="CHEBI:58475"/>
        <dbReference type="ChEBI" id="CHEBI:58525"/>
        <dbReference type="EC" id="4.3.2.10"/>
    </reaction>
</comment>
<comment type="pathway">
    <text evidence="1">Amino-acid biosynthesis; L-histidine biosynthesis; L-histidine from 5-phospho-alpha-D-ribose 1-diphosphate: step 5/9.</text>
</comment>
<comment type="subunit">
    <text evidence="1">Heterodimer of HisH and HisF.</text>
</comment>
<comment type="subcellular location">
    <subcellularLocation>
        <location evidence="1">Cytoplasm</location>
    </subcellularLocation>
</comment>
<comment type="similarity">
    <text evidence="1">Belongs to the HisA/HisF family.</text>
</comment>
<evidence type="ECO:0000255" key="1">
    <source>
        <dbReference type="HAMAP-Rule" id="MF_01013"/>
    </source>
</evidence>
<dbReference type="EC" id="4.3.2.10" evidence="1"/>
<dbReference type="EMBL" id="CP000939">
    <property type="protein sequence ID" value="ACA46043.1"/>
    <property type="molecule type" value="Genomic_DNA"/>
</dbReference>
<dbReference type="RefSeq" id="WP_004451729.1">
    <property type="nucleotide sequence ID" value="NC_010516.1"/>
</dbReference>
<dbReference type="SMR" id="B1ILB0"/>
<dbReference type="KEGG" id="cbb:CLD_2980"/>
<dbReference type="HOGENOM" id="CLU_048577_4_0_9"/>
<dbReference type="UniPathway" id="UPA00031">
    <property type="reaction ID" value="UER00010"/>
</dbReference>
<dbReference type="Proteomes" id="UP000008541">
    <property type="component" value="Chromosome"/>
</dbReference>
<dbReference type="GO" id="GO:0005737">
    <property type="term" value="C:cytoplasm"/>
    <property type="evidence" value="ECO:0007669"/>
    <property type="project" value="UniProtKB-SubCell"/>
</dbReference>
<dbReference type="GO" id="GO:0000107">
    <property type="term" value="F:imidazoleglycerol-phosphate synthase activity"/>
    <property type="evidence" value="ECO:0007669"/>
    <property type="project" value="UniProtKB-UniRule"/>
</dbReference>
<dbReference type="GO" id="GO:0016829">
    <property type="term" value="F:lyase activity"/>
    <property type="evidence" value="ECO:0007669"/>
    <property type="project" value="UniProtKB-KW"/>
</dbReference>
<dbReference type="GO" id="GO:0000105">
    <property type="term" value="P:L-histidine biosynthetic process"/>
    <property type="evidence" value="ECO:0007669"/>
    <property type="project" value="UniProtKB-UniRule"/>
</dbReference>
<dbReference type="CDD" id="cd04731">
    <property type="entry name" value="HisF"/>
    <property type="match status" value="1"/>
</dbReference>
<dbReference type="FunFam" id="3.20.20.70:FF:000006">
    <property type="entry name" value="Imidazole glycerol phosphate synthase subunit HisF"/>
    <property type="match status" value="1"/>
</dbReference>
<dbReference type="Gene3D" id="3.20.20.70">
    <property type="entry name" value="Aldolase class I"/>
    <property type="match status" value="1"/>
</dbReference>
<dbReference type="HAMAP" id="MF_01013">
    <property type="entry name" value="HisF"/>
    <property type="match status" value="1"/>
</dbReference>
<dbReference type="InterPro" id="IPR013785">
    <property type="entry name" value="Aldolase_TIM"/>
</dbReference>
<dbReference type="InterPro" id="IPR006062">
    <property type="entry name" value="His_biosynth"/>
</dbReference>
<dbReference type="InterPro" id="IPR004651">
    <property type="entry name" value="HisF"/>
</dbReference>
<dbReference type="InterPro" id="IPR050064">
    <property type="entry name" value="IGPS_HisA/HisF"/>
</dbReference>
<dbReference type="InterPro" id="IPR011060">
    <property type="entry name" value="RibuloseP-bd_barrel"/>
</dbReference>
<dbReference type="NCBIfam" id="TIGR00735">
    <property type="entry name" value="hisF"/>
    <property type="match status" value="1"/>
</dbReference>
<dbReference type="PANTHER" id="PTHR21235:SF2">
    <property type="entry name" value="IMIDAZOLE GLYCEROL PHOSPHATE SYNTHASE HISHF"/>
    <property type="match status" value="1"/>
</dbReference>
<dbReference type="PANTHER" id="PTHR21235">
    <property type="entry name" value="IMIDAZOLE GLYCEROL PHOSPHATE SYNTHASE SUBUNIT HISF/H IGP SYNTHASE SUBUNIT HISF/H"/>
    <property type="match status" value="1"/>
</dbReference>
<dbReference type="Pfam" id="PF00977">
    <property type="entry name" value="His_biosynth"/>
    <property type="match status" value="1"/>
</dbReference>
<dbReference type="SUPFAM" id="SSF51366">
    <property type="entry name" value="Ribulose-phoshate binding barrel"/>
    <property type="match status" value="1"/>
</dbReference>
<sequence>MITKRIIPCLDVDMGRVVKGVNFVNLKDVGDPVEIAEFYNKEGADEIVFLDISATHEGRATMIDVVRKTAEKLFIPLTVGGGIKNINDFKDILRAGADKISVNSSAIRNPKLIKKAAECFGSQCVVVAIDGKKRKDKDGWNVFINGGRIDTGLDAIEWARKVEKLGAGEILLTSMDADGTKEGYDLELTNEVSKAVNIPVIASGGCGKLKHFGEIFEKSSADAALAASLFHFKELSIKEVKNYLKEEGFSVRL</sequence>
<accession>B1ILB0</accession>
<reference key="1">
    <citation type="journal article" date="2007" name="PLoS ONE">
        <title>Analysis of the neurotoxin complex genes in Clostridium botulinum A1-A4 and B1 strains: BoNT/A3, /Ba4 and /B1 clusters are located within plasmids.</title>
        <authorList>
            <person name="Smith T.J."/>
            <person name="Hill K.K."/>
            <person name="Foley B.T."/>
            <person name="Detter J.C."/>
            <person name="Munk A.C."/>
            <person name="Bruce D.C."/>
            <person name="Doggett N.A."/>
            <person name="Smith L.A."/>
            <person name="Marks J.D."/>
            <person name="Xie G."/>
            <person name="Brettin T.S."/>
        </authorList>
    </citation>
    <scope>NUCLEOTIDE SEQUENCE [LARGE SCALE GENOMIC DNA]</scope>
    <source>
        <strain>Okra / Type B1</strain>
    </source>
</reference>